<accession>Q8FIP8</accession>
<proteinExistence type="predicted"/>
<reference key="1">
    <citation type="journal article" date="2002" name="Proc. Natl. Acad. Sci. U.S.A.">
        <title>Extensive mosaic structure revealed by the complete genome sequence of uropathogenic Escherichia coli.</title>
        <authorList>
            <person name="Welch R.A."/>
            <person name="Burland V."/>
            <person name="Plunkett G. III"/>
            <person name="Redford P."/>
            <person name="Roesch P."/>
            <person name="Rasko D."/>
            <person name="Buckles E.L."/>
            <person name="Liou S.-R."/>
            <person name="Boutin A."/>
            <person name="Hackett J."/>
            <person name="Stroud D."/>
            <person name="Mayhew G.F."/>
            <person name="Rose D.J."/>
            <person name="Zhou S."/>
            <person name="Schwartz D.C."/>
            <person name="Perna N.T."/>
            <person name="Mobley H.L.T."/>
            <person name="Donnenberg M.S."/>
            <person name="Blattner F.R."/>
        </authorList>
    </citation>
    <scope>NUCLEOTIDE SEQUENCE [LARGE SCALE GENOMIC DNA]</scope>
    <source>
        <strain>CFT073 / ATCC 700928 / UPEC</strain>
    </source>
</reference>
<organism>
    <name type="scientific">Escherichia coli O6:H1 (strain CFT073 / ATCC 700928 / UPEC)</name>
    <dbReference type="NCBI Taxonomy" id="199310"/>
    <lineage>
        <taxon>Bacteria</taxon>
        <taxon>Pseudomonadati</taxon>
        <taxon>Pseudomonadota</taxon>
        <taxon>Gammaproteobacteria</taxon>
        <taxon>Enterobacterales</taxon>
        <taxon>Enterobacteriaceae</taxon>
        <taxon>Escherichia</taxon>
    </lineage>
</organism>
<keyword id="KW-1185">Reference proteome</keyword>
<feature type="chain" id="PRO_0000168826" description="Uncharacterized protein YceQ">
    <location>
        <begin position="1"/>
        <end position="106"/>
    </location>
</feature>
<protein>
    <recommendedName>
        <fullName>Uncharacterized protein YceQ</fullName>
    </recommendedName>
</protein>
<name>YCEQ_ECOL6</name>
<comment type="sequence caution" evidence="1">
    <conflict type="erroneous initiation">
        <sequence resource="EMBL-CDS" id="AAN79825"/>
    </conflict>
</comment>
<dbReference type="EMBL" id="AE014075">
    <property type="protein sequence ID" value="AAN79825.1"/>
    <property type="status" value="ALT_INIT"/>
    <property type="molecule type" value="Genomic_DNA"/>
</dbReference>
<dbReference type="STRING" id="199310.c1354"/>
<dbReference type="KEGG" id="ecc:c1354"/>
<dbReference type="eggNOG" id="ENOG5033UU4">
    <property type="taxonomic scope" value="Bacteria"/>
</dbReference>
<dbReference type="HOGENOM" id="CLU_163229_0_0_6"/>
<dbReference type="Proteomes" id="UP000001410">
    <property type="component" value="Chromosome"/>
</dbReference>
<dbReference type="AntiFam" id="ANF00070">
    <property type="entry name" value="Spurious family"/>
</dbReference>
<gene>
    <name type="primary">yceQ</name>
    <name type="ordered locus">c1354</name>
</gene>
<evidence type="ECO:0000305" key="1"/>
<sequence>MSVARFSCGKTAQLSEKQTGYYSPEIFPSTGKDCNPQPANCLKDQYVLRHCCVDDRSGKMGYSVKFLVLTRMDTETASLFHCKPCYSKMTFTIYHPLTHSFFTSCW</sequence>